<name>OBG_ECOUT</name>
<proteinExistence type="inferred from homology"/>
<dbReference type="EC" id="3.6.5.-" evidence="1"/>
<dbReference type="EMBL" id="CP000243">
    <property type="protein sequence ID" value="ABE09060.1"/>
    <property type="molecule type" value="Genomic_DNA"/>
</dbReference>
<dbReference type="SMR" id="Q1R6F4"/>
<dbReference type="KEGG" id="eci:UTI89_C3616"/>
<dbReference type="HOGENOM" id="CLU_011747_2_0_6"/>
<dbReference type="Proteomes" id="UP000001952">
    <property type="component" value="Chromosome"/>
</dbReference>
<dbReference type="GO" id="GO:0005737">
    <property type="term" value="C:cytoplasm"/>
    <property type="evidence" value="ECO:0007669"/>
    <property type="project" value="UniProtKB-SubCell"/>
</dbReference>
<dbReference type="GO" id="GO:0005525">
    <property type="term" value="F:GTP binding"/>
    <property type="evidence" value="ECO:0007669"/>
    <property type="project" value="UniProtKB-UniRule"/>
</dbReference>
<dbReference type="GO" id="GO:0003924">
    <property type="term" value="F:GTPase activity"/>
    <property type="evidence" value="ECO:0007669"/>
    <property type="project" value="UniProtKB-UniRule"/>
</dbReference>
<dbReference type="GO" id="GO:0000287">
    <property type="term" value="F:magnesium ion binding"/>
    <property type="evidence" value="ECO:0007669"/>
    <property type="project" value="InterPro"/>
</dbReference>
<dbReference type="GO" id="GO:0042254">
    <property type="term" value="P:ribosome biogenesis"/>
    <property type="evidence" value="ECO:0007669"/>
    <property type="project" value="UniProtKB-UniRule"/>
</dbReference>
<dbReference type="CDD" id="cd01898">
    <property type="entry name" value="Obg"/>
    <property type="match status" value="1"/>
</dbReference>
<dbReference type="FunFam" id="2.70.210.12:FF:000001">
    <property type="entry name" value="GTPase Obg"/>
    <property type="match status" value="1"/>
</dbReference>
<dbReference type="FunFam" id="3.40.50.300:FF:000185">
    <property type="entry name" value="GTPase Obg"/>
    <property type="match status" value="1"/>
</dbReference>
<dbReference type="Gene3D" id="2.70.210.12">
    <property type="entry name" value="GTP1/OBG domain"/>
    <property type="match status" value="1"/>
</dbReference>
<dbReference type="Gene3D" id="3.40.50.300">
    <property type="entry name" value="P-loop containing nucleotide triphosphate hydrolases"/>
    <property type="match status" value="1"/>
</dbReference>
<dbReference type="HAMAP" id="MF_01454">
    <property type="entry name" value="GTPase_Obg"/>
    <property type="match status" value="1"/>
</dbReference>
<dbReference type="InterPro" id="IPR031167">
    <property type="entry name" value="G_OBG"/>
</dbReference>
<dbReference type="InterPro" id="IPR006073">
    <property type="entry name" value="GTP-bd"/>
</dbReference>
<dbReference type="InterPro" id="IPR014100">
    <property type="entry name" value="GTP-bd_Obg/CgtA"/>
</dbReference>
<dbReference type="InterPro" id="IPR006074">
    <property type="entry name" value="GTP1-OBG_CS"/>
</dbReference>
<dbReference type="InterPro" id="IPR006169">
    <property type="entry name" value="GTP1_OBG_dom"/>
</dbReference>
<dbReference type="InterPro" id="IPR036726">
    <property type="entry name" value="GTP1_OBG_dom_sf"/>
</dbReference>
<dbReference type="InterPro" id="IPR045086">
    <property type="entry name" value="OBG_GTPase"/>
</dbReference>
<dbReference type="InterPro" id="IPR027417">
    <property type="entry name" value="P-loop_NTPase"/>
</dbReference>
<dbReference type="NCBIfam" id="TIGR02729">
    <property type="entry name" value="Obg_CgtA"/>
    <property type="match status" value="1"/>
</dbReference>
<dbReference type="NCBIfam" id="NF008955">
    <property type="entry name" value="PRK12297.1"/>
    <property type="match status" value="1"/>
</dbReference>
<dbReference type="NCBIfam" id="NF008956">
    <property type="entry name" value="PRK12299.1"/>
    <property type="match status" value="1"/>
</dbReference>
<dbReference type="PANTHER" id="PTHR11702">
    <property type="entry name" value="DEVELOPMENTALLY REGULATED GTP-BINDING PROTEIN-RELATED"/>
    <property type="match status" value="1"/>
</dbReference>
<dbReference type="PANTHER" id="PTHR11702:SF31">
    <property type="entry name" value="MITOCHONDRIAL RIBOSOME-ASSOCIATED GTPASE 2"/>
    <property type="match status" value="1"/>
</dbReference>
<dbReference type="Pfam" id="PF01018">
    <property type="entry name" value="GTP1_OBG"/>
    <property type="match status" value="1"/>
</dbReference>
<dbReference type="Pfam" id="PF01926">
    <property type="entry name" value="MMR_HSR1"/>
    <property type="match status" value="1"/>
</dbReference>
<dbReference type="PIRSF" id="PIRSF002401">
    <property type="entry name" value="GTP_bd_Obg/CgtA"/>
    <property type="match status" value="1"/>
</dbReference>
<dbReference type="PRINTS" id="PR00326">
    <property type="entry name" value="GTP1OBG"/>
</dbReference>
<dbReference type="SUPFAM" id="SSF82051">
    <property type="entry name" value="Obg GTP-binding protein N-terminal domain"/>
    <property type="match status" value="1"/>
</dbReference>
<dbReference type="SUPFAM" id="SSF52540">
    <property type="entry name" value="P-loop containing nucleoside triphosphate hydrolases"/>
    <property type="match status" value="1"/>
</dbReference>
<dbReference type="PROSITE" id="PS51710">
    <property type="entry name" value="G_OBG"/>
    <property type="match status" value="1"/>
</dbReference>
<dbReference type="PROSITE" id="PS00905">
    <property type="entry name" value="GTP1_OBG"/>
    <property type="match status" value="1"/>
</dbReference>
<dbReference type="PROSITE" id="PS51883">
    <property type="entry name" value="OBG"/>
    <property type="match status" value="1"/>
</dbReference>
<sequence>MKFVDEASILVVAGDGGNGCVSFRREKYIPKGGPDGGDGGDGGDVWMEADENLNTLIDYRFEKSFRAERGQNGASRDCTGKRGKDVTIKVPVGTRVIDQGTGETMGDMTKHGQRLLVAKGGWHGLGNTRFKSSVNRTPRQKTNGTPGDKRELLLELMLLADVGMLGMPNAGKSTFIRAVSAAKPKVADYPFTTLVPSLGVVRMDNEKSFVVADIPGLIEGAAEGAGLGIRFLKHLERCRVLLHLIDIDPIDGTDPVENARIIISELEKYSQDLAAKPRWLVFNKIDLLDKVEAEEKAKAIAEALGWEDKYYLISAASGLGVKDLCWDVMTFIIENPVVQAEEAKQPEKVEFMWDDYHRQQLEEIAEEDDEDWDEDDEEGVEFIYKR</sequence>
<feature type="chain" id="PRO_0000385915" description="GTPase Obg">
    <location>
        <begin position="1"/>
        <end position="386"/>
    </location>
</feature>
<feature type="domain" description="Obg" evidence="2">
    <location>
        <begin position="1"/>
        <end position="159"/>
    </location>
</feature>
<feature type="domain" description="OBG-type G" evidence="1">
    <location>
        <begin position="160"/>
        <end position="333"/>
    </location>
</feature>
<feature type="region of interest" description="Disordered" evidence="3">
    <location>
        <begin position="127"/>
        <end position="147"/>
    </location>
</feature>
<feature type="compositionally biased region" description="Polar residues" evidence="3">
    <location>
        <begin position="129"/>
        <end position="145"/>
    </location>
</feature>
<feature type="binding site" evidence="1">
    <location>
        <begin position="166"/>
        <end position="173"/>
    </location>
    <ligand>
        <name>GTP</name>
        <dbReference type="ChEBI" id="CHEBI:37565"/>
    </ligand>
</feature>
<feature type="binding site" evidence="1">
    <location>
        <position position="173"/>
    </location>
    <ligand>
        <name>Mg(2+)</name>
        <dbReference type="ChEBI" id="CHEBI:18420"/>
    </ligand>
</feature>
<feature type="binding site" evidence="1">
    <location>
        <begin position="191"/>
        <end position="195"/>
    </location>
    <ligand>
        <name>GTP</name>
        <dbReference type="ChEBI" id="CHEBI:37565"/>
    </ligand>
</feature>
<feature type="binding site" evidence="1">
    <location>
        <position position="193"/>
    </location>
    <ligand>
        <name>Mg(2+)</name>
        <dbReference type="ChEBI" id="CHEBI:18420"/>
    </ligand>
</feature>
<feature type="binding site" evidence="1">
    <location>
        <begin position="213"/>
        <end position="216"/>
    </location>
    <ligand>
        <name>GTP</name>
        <dbReference type="ChEBI" id="CHEBI:37565"/>
    </ligand>
</feature>
<feature type="binding site" evidence="1">
    <location>
        <begin position="283"/>
        <end position="286"/>
    </location>
    <ligand>
        <name>GTP</name>
        <dbReference type="ChEBI" id="CHEBI:37565"/>
    </ligand>
</feature>
<feature type="binding site" evidence="1">
    <location>
        <begin position="314"/>
        <end position="316"/>
    </location>
    <ligand>
        <name>GTP</name>
        <dbReference type="ChEBI" id="CHEBI:37565"/>
    </ligand>
</feature>
<organism>
    <name type="scientific">Escherichia coli (strain UTI89 / UPEC)</name>
    <dbReference type="NCBI Taxonomy" id="364106"/>
    <lineage>
        <taxon>Bacteria</taxon>
        <taxon>Pseudomonadati</taxon>
        <taxon>Pseudomonadota</taxon>
        <taxon>Gammaproteobacteria</taxon>
        <taxon>Enterobacterales</taxon>
        <taxon>Enterobacteriaceae</taxon>
        <taxon>Escherichia</taxon>
    </lineage>
</organism>
<accession>Q1R6F4</accession>
<evidence type="ECO:0000255" key="1">
    <source>
        <dbReference type="HAMAP-Rule" id="MF_01454"/>
    </source>
</evidence>
<evidence type="ECO:0000255" key="2">
    <source>
        <dbReference type="PROSITE-ProRule" id="PRU01231"/>
    </source>
</evidence>
<evidence type="ECO:0000256" key="3">
    <source>
        <dbReference type="SAM" id="MobiDB-lite"/>
    </source>
</evidence>
<protein>
    <recommendedName>
        <fullName evidence="1">GTPase Obg</fullName>
        <ecNumber evidence="1">3.6.5.-</ecNumber>
    </recommendedName>
    <alternativeName>
        <fullName evidence="1">GTP-binding protein Obg</fullName>
    </alternativeName>
</protein>
<gene>
    <name evidence="1" type="primary">obg</name>
    <name type="ordered locus">UTI89_C3616</name>
</gene>
<keyword id="KW-0963">Cytoplasm</keyword>
<keyword id="KW-0342">GTP-binding</keyword>
<keyword id="KW-0378">Hydrolase</keyword>
<keyword id="KW-0460">Magnesium</keyword>
<keyword id="KW-0479">Metal-binding</keyword>
<keyword id="KW-0547">Nucleotide-binding</keyword>
<reference key="1">
    <citation type="journal article" date="2006" name="Proc. Natl. Acad. Sci. U.S.A.">
        <title>Identification of genes subject to positive selection in uropathogenic strains of Escherichia coli: a comparative genomics approach.</title>
        <authorList>
            <person name="Chen S.L."/>
            <person name="Hung C.-S."/>
            <person name="Xu J."/>
            <person name="Reigstad C.S."/>
            <person name="Magrini V."/>
            <person name="Sabo A."/>
            <person name="Blasiar D."/>
            <person name="Bieri T."/>
            <person name="Meyer R.R."/>
            <person name="Ozersky P."/>
            <person name="Armstrong J.R."/>
            <person name="Fulton R.S."/>
            <person name="Latreille J.P."/>
            <person name="Spieth J."/>
            <person name="Hooton T.M."/>
            <person name="Mardis E.R."/>
            <person name="Hultgren S.J."/>
            <person name="Gordon J.I."/>
        </authorList>
    </citation>
    <scope>NUCLEOTIDE SEQUENCE [LARGE SCALE GENOMIC DNA]</scope>
    <source>
        <strain>UTI89 / UPEC</strain>
    </source>
</reference>
<comment type="function">
    <text evidence="1">An essential GTPase which binds GTP, GDP and possibly (p)ppGpp with moderate affinity, with high nucleotide exchange rates and a fairly low GTP hydrolysis rate. Plays a role in control of the cell cycle, stress response, ribosome biogenesis and in those bacteria that undergo differentiation, in morphogenesis control.</text>
</comment>
<comment type="cofactor">
    <cofactor evidence="1">
        <name>Mg(2+)</name>
        <dbReference type="ChEBI" id="CHEBI:18420"/>
    </cofactor>
</comment>
<comment type="subunit">
    <text evidence="1">Monomer.</text>
</comment>
<comment type="subcellular location">
    <subcellularLocation>
        <location evidence="1">Cytoplasm</location>
    </subcellularLocation>
</comment>
<comment type="similarity">
    <text evidence="1">Belongs to the TRAFAC class OBG-HflX-like GTPase superfamily. OBG GTPase family.</text>
</comment>